<name>CYB_CRYMA</name>
<protein>
    <recommendedName>
        <fullName>Cytochrome b</fullName>
    </recommendedName>
    <alternativeName>
        <fullName>Complex III subunit 3</fullName>
    </alternativeName>
    <alternativeName>
        <fullName>Complex III subunit III</fullName>
    </alternativeName>
    <alternativeName>
        <fullName>Cytochrome b-c1 complex subunit 3</fullName>
    </alternativeName>
    <alternativeName>
        <fullName>Ubiquinol-cytochrome-c reductase complex cytochrome b subunit</fullName>
    </alternativeName>
</protein>
<sequence>MTNIRKTHPLMKIINNSFIDLPAPSNISSWWNFGSLLGVCLIIQILTGLFLAMHYTSDTMTAFSSVTHICRDVNYGWLIRYLHANGASMFFICLFMHVGRGLYYGSYMFMETWNIGVLLLFAVMATAFMGYVLPWGQMSFWGATVITNLLSAIPYIGSDLVQWIWGGFSVDKATLTRFFAFHFILPFVITALAGVHLLFLHETGSNNPSGLSSDADKIPFHPYYTIKDILGVLLLFLVLTCLVLFSPDLLGDPDNYTPANPLNTPPHIKPEWYFLFAYAILRSIPNKLGGVLALVLSILILAFIPLLHTSKQRSMMFWPLSQCLFWILVADLLTLTWIGGQPVEHPFIIIGQLASILYFLLLLVMMPITSLLENNLLKW</sequence>
<reference key="1">
    <citation type="submission" date="2004-03" db="EMBL/GenBank/DDBJ databases">
        <title>Molecular phylogenetics of the Soricidae (Insectivora, Mammalia) based on mitochondrial cytochrome b gene sequences.</title>
        <authorList>
            <person name="Ohdachi S.D."/>
            <person name="Iwasa M.A."/>
            <person name="Abe H."/>
            <person name="Vogel P."/>
            <person name="Oshida T."/>
            <person name="Lin L.K."/>
            <person name="Hasegawa M."/>
        </authorList>
    </citation>
    <scope>NUCLEOTIDE SEQUENCE [GENOMIC DNA]</scope>
    <source>
        <tissue>Liver</tissue>
    </source>
</reference>
<keyword id="KW-0249">Electron transport</keyword>
<keyword id="KW-0349">Heme</keyword>
<keyword id="KW-0408">Iron</keyword>
<keyword id="KW-0472">Membrane</keyword>
<keyword id="KW-0479">Metal-binding</keyword>
<keyword id="KW-0496">Mitochondrion</keyword>
<keyword id="KW-0999">Mitochondrion inner membrane</keyword>
<keyword id="KW-0679">Respiratory chain</keyword>
<keyword id="KW-0812">Transmembrane</keyword>
<keyword id="KW-1133">Transmembrane helix</keyword>
<keyword id="KW-0813">Transport</keyword>
<keyword id="KW-0830">Ubiquinone</keyword>
<comment type="function">
    <text evidence="2">Component of the ubiquinol-cytochrome c reductase complex (complex III or cytochrome b-c1 complex) that is part of the mitochondrial respiratory chain. The b-c1 complex mediates electron transfer from ubiquinol to cytochrome c. Contributes to the generation of a proton gradient across the mitochondrial membrane that is then used for ATP synthesis.</text>
</comment>
<comment type="cofactor">
    <cofactor evidence="2">
        <name>heme b</name>
        <dbReference type="ChEBI" id="CHEBI:60344"/>
    </cofactor>
    <text evidence="2">Binds 2 heme b groups non-covalently.</text>
</comment>
<comment type="subunit">
    <text evidence="2">The cytochrome bc1 complex contains 11 subunits: 3 respiratory subunits (MT-CYB, CYC1 and UQCRFS1), 2 core proteins (UQCRC1 and UQCRC2) and 6 low-molecular weight proteins (UQCRH/QCR6, UQCRB/QCR7, UQCRQ/QCR8, UQCR10/QCR9, UQCR11/QCR10 and a cleavage product of UQCRFS1). This cytochrome bc1 complex then forms a dimer.</text>
</comment>
<comment type="subcellular location">
    <subcellularLocation>
        <location evidence="2">Mitochondrion inner membrane</location>
        <topology evidence="2">Multi-pass membrane protein</topology>
    </subcellularLocation>
</comment>
<comment type="miscellaneous">
    <text evidence="1">Heme 1 (or BL or b562) is low-potential and absorbs at about 562 nm, and heme 2 (or BH or b566) is high-potential and absorbs at about 566 nm.</text>
</comment>
<comment type="similarity">
    <text evidence="3 4">Belongs to the cytochrome b family.</text>
</comment>
<comment type="caution">
    <text evidence="2">The full-length protein contains only eight transmembrane helices, not nine as predicted by bioinformatics tools.</text>
</comment>
<geneLocation type="mitochondrion"/>
<organism>
    <name type="scientific">Cryptotis magna</name>
    <name type="common">Big Mexican small-eared shrew</name>
    <dbReference type="NCBI Taxonomy" id="268771"/>
    <lineage>
        <taxon>Eukaryota</taxon>
        <taxon>Metazoa</taxon>
        <taxon>Chordata</taxon>
        <taxon>Craniata</taxon>
        <taxon>Vertebrata</taxon>
        <taxon>Euteleostomi</taxon>
        <taxon>Mammalia</taxon>
        <taxon>Eutheria</taxon>
        <taxon>Laurasiatheria</taxon>
        <taxon>Eulipotyphla</taxon>
        <taxon>Soricidae</taxon>
        <taxon>Soricinae</taxon>
        <taxon>Cryptotis</taxon>
    </lineage>
</organism>
<feature type="chain" id="PRO_0000235911" description="Cytochrome b">
    <location>
        <begin position="1"/>
        <end position="379"/>
    </location>
</feature>
<feature type="transmembrane region" description="Helical" evidence="2">
    <location>
        <begin position="33"/>
        <end position="53"/>
    </location>
</feature>
<feature type="transmembrane region" description="Helical" evidence="2">
    <location>
        <begin position="77"/>
        <end position="98"/>
    </location>
</feature>
<feature type="transmembrane region" description="Helical" evidence="2">
    <location>
        <begin position="113"/>
        <end position="133"/>
    </location>
</feature>
<feature type="transmembrane region" description="Helical" evidence="2">
    <location>
        <begin position="178"/>
        <end position="198"/>
    </location>
</feature>
<feature type="transmembrane region" description="Helical" evidence="2">
    <location>
        <begin position="226"/>
        <end position="246"/>
    </location>
</feature>
<feature type="transmembrane region" description="Helical" evidence="2">
    <location>
        <begin position="288"/>
        <end position="308"/>
    </location>
</feature>
<feature type="transmembrane region" description="Helical" evidence="2">
    <location>
        <begin position="320"/>
        <end position="340"/>
    </location>
</feature>
<feature type="transmembrane region" description="Helical" evidence="2">
    <location>
        <begin position="347"/>
        <end position="367"/>
    </location>
</feature>
<feature type="binding site" description="axial binding residue" evidence="2">
    <location>
        <position position="83"/>
    </location>
    <ligand>
        <name>heme b</name>
        <dbReference type="ChEBI" id="CHEBI:60344"/>
        <label>b562</label>
    </ligand>
    <ligandPart>
        <name>Fe</name>
        <dbReference type="ChEBI" id="CHEBI:18248"/>
    </ligandPart>
</feature>
<feature type="binding site" description="axial binding residue" evidence="2">
    <location>
        <position position="97"/>
    </location>
    <ligand>
        <name>heme b</name>
        <dbReference type="ChEBI" id="CHEBI:60344"/>
        <label>b566</label>
    </ligand>
    <ligandPart>
        <name>Fe</name>
        <dbReference type="ChEBI" id="CHEBI:18248"/>
    </ligandPart>
</feature>
<feature type="binding site" description="axial binding residue" evidence="2">
    <location>
        <position position="182"/>
    </location>
    <ligand>
        <name>heme b</name>
        <dbReference type="ChEBI" id="CHEBI:60344"/>
        <label>b562</label>
    </ligand>
    <ligandPart>
        <name>Fe</name>
        <dbReference type="ChEBI" id="CHEBI:18248"/>
    </ligandPart>
</feature>
<feature type="binding site" description="axial binding residue" evidence="2">
    <location>
        <position position="196"/>
    </location>
    <ligand>
        <name>heme b</name>
        <dbReference type="ChEBI" id="CHEBI:60344"/>
        <label>b566</label>
    </ligand>
    <ligandPart>
        <name>Fe</name>
        <dbReference type="ChEBI" id="CHEBI:18248"/>
    </ligandPart>
</feature>
<feature type="binding site" evidence="2">
    <location>
        <position position="201"/>
    </location>
    <ligand>
        <name>a ubiquinone</name>
        <dbReference type="ChEBI" id="CHEBI:16389"/>
    </ligand>
</feature>
<dbReference type="EMBL" id="AB175141">
    <property type="protein sequence ID" value="BAE92706.1"/>
    <property type="molecule type" value="Genomic_DNA"/>
</dbReference>
<dbReference type="SMR" id="Q1XIJ0"/>
<dbReference type="GO" id="GO:0005743">
    <property type="term" value="C:mitochondrial inner membrane"/>
    <property type="evidence" value="ECO:0007669"/>
    <property type="project" value="UniProtKB-SubCell"/>
</dbReference>
<dbReference type="GO" id="GO:0045275">
    <property type="term" value="C:respiratory chain complex III"/>
    <property type="evidence" value="ECO:0007669"/>
    <property type="project" value="InterPro"/>
</dbReference>
<dbReference type="GO" id="GO:0046872">
    <property type="term" value="F:metal ion binding"/>
    <property type="evidence" value="ECO:0007669"/>
    <property type="project" value="UniProtKB-KW"/>
</dbReference>
<dbReference type="GO" id="GO:0008121">
    <property type="term" value="F:ubiquinol-cytochrome-c reductase activity"/>
    <property type="evidence" value="ECO:0007669"/>
    <property type="project" value="InterPro"/>
</dbReference>
<dbReference type="GO" id="GO:0006122">
    <property type="term" value="P:mitochondrial electron transport, ubiquinol to cytochrome c"/>
    <property type="evidence" value="ECO:0007669"/>
    <property type="project" value="TreeGrafter"/>
</dbReference>
<dbReference type="CDD" id="cd00290">
    <property type="entry name" value="cytochrome_b_C"/>
    <property type="match status" value="1"/>
</dbReference>
<dbReference type="CDD" id="cd00284">
    <property type="entry name" value="Cytochrome_b_N"/>
    <property type="match status" value="1"/>
</dbReference>
<dbReference type="FunFam" id="1.20.810.10:FF:000002">
    <property type="entry name" value="Cytochrome b"/>
    <property type="match status" value="1"/>
</dbReference>
<dbReference type="Gene3D" id="1.20.810.10">
    <property type="entry name" value="Cytochrome Bc1 Complex, Chain C"/>
    <property type="match status" value="1"/>
</dbReference>
<dbReference type="InterPro" id="IPR005798">
    <property type="entry name" value="Cyt_b/b6_C"/>
</dbReference>
<dbReference type="InterPro" id="IPR036150">
    <property type="entry name" value="Cyt_b/b6_C_sf"/>
</dbReference>
<dbReference type="InterPro" id="IPR005797">
    <property type="entry name" value="Cyt_b/b6_N"/>
</dbReference>
<dbReference type="InterPro" id="IPR027387">
    <property type="entry name" value="Cytb/b6-like_sf"/>
</dbReference>
<dbReference type="InterPro" id="IPR030689">
    <property type="entry name" value="Cytochrome_b"/>
</dbReference>
<dbReference type="InterPro" id="IPR048260">
    <property type="entry name" value="Cytochrome_b_C_euk/bac"/>
</dbReference>
<dbReference type="InterPro" id="IPR048259">
    <property type="entry name" value="Cytochrome_b_N_euk/bac"/>
</dbReference>
<dbReference type="InterPro" id="IPR016174">
    <property type="entry name" value="Di-haem_cyt_TM"/>
</dbReference>
<dbReference type="PANTHER" id="PTHR19271">
    <property type="entry name" value="CYTOCHROME B"/>
    <property type="match status" value="1"/>
</dbReference>
<dbReference type="PANTHER" id="PTHR19271:SF16">
    <property type="entry name" value="CYTOCHROME B"/>
    <property type="match status" value="1"/>
</dbReference>
<dbReference type="Pfam" id="PF00032">
    <property type="entry name" value="Cytochrom_B_C"/>
    <property type="match status" value="1"/>
</dbReference>
<dbReference type="Pfam" id="PF00033">
    <property type="entry name" value="Cytochrome_B"/>
    <property type="match status" value="1"/>
</dbReference>
<dbReference type="PIRSF" id="PIRSF038885">
    <property type="entry name" value="COB"/>
    <property type="match status" value="1"/>
</dbReference>
<dbReference type="SUPFAM" id="SSF81648">
    <property type="entry name" value="a domain/subunit of cytochrome bc1 complex (Ubiquinol-cytochrome c reductase)"/>
    <property type="match status" value="1"/>
</dbReference>
<dbReference type="SUPFAM" id="SSF81342">
    <property type="entry name" value="Transmembrane di-heme cytochromes"/>
    <property type="match status" value="1"/>
</dbReference>
<dbReference type="PROSITE" id="PS51003">
    <property type="entry name" value="CYTB_CTER"/>
    <property type="match status" value="1"/>
</dbReference>
<dbReference type="PROSITE" id="PS51002">
    <property type="entry name" value="CYTB_NTER"/>
    <property type="match status" value="1"/>
</dbReference>
<accession>Q1XIJ0</accession>
<evidence type="ECO:0000250" key="1"/>
<evidence type="ECO:0000250" key="2">
    <source>
        <dbReference type="UniProtKB" id="P00157"/>
    </source>
</evidence>
<evidence type="ECO:0000255" key="3">
    <source>
        <dbReference type="PROSITE-ProRule" id="PRU00967"/>
    </source>
</evidence>
<evidence type="ECO:0000255" key="4">
    <source>
        <dbReference type="PROSITE-ProRule" id="PRU00968"/>
    </source>
</evidence>
<gene>
    <name type="primary">MT-CYB</name>
    <name type="synonym">COB</name>
    <name type="synonym">CYTB</name>
    <name type="synonym">MTCYB</name>
</gene>
<proteinExistence type="inferred from homology"/>